<proteinExistence type="inferred from homology"/>
<sequence length="317" mass="34321">MSWFDRLRQGLSKTRQQISGTAGPLDQEVQTAFTRIDNIEDLEYALIAADVGRAATEEIIEDIRKNGEGRLQDALMRALTLQLEPNARRAQFRELGFSPDVSRSKVDPKGHVVMVIGVNGVGKTTTIAKLGQYYMERGQSVMFAAGDTFRAAAGTQLGVWGERLGVPVIQGVDGGDPAAVAFDAAGARKARGTDLLFVDTAGRLHNKHNLMEELKKVRRVIDKADPGEPAEVWLVLDAVTGQNGLQQAKKFHEATPLTGVVVTKLDGTAKGGILVPIVRELGVPIKFIGVGEQPGDLQPFDSQEFVRALFDVELPKA</sequence>
<keyword id="KW-1003">Cell membrane</keyword>
<keyword id="KW-0963">Cytoplasm</keyword>
<keyword id="KW-0342">GTP-binding</keyword>
<keyword id="KW-0378">Hydrolase</keyword>
<keyword id="KW-0472">Membrane</keyword>
<keyword id="KW-0547">Nucleotide-binding</keyword>
<keyword id="KW-0675">Receptor</keyword>
<keyword id="KW-1185">Reference proteome</keyword>
<comment type="function">
    <text evidence="1">Involved in targeting and insertion of nascent membrane proteins into the cytoplasmic membrane. Acts as a receptor for the complex formed by the signal recognition particle (SRP) and the ribosome-nascent chain (RNC).</text>
</comment>
<comment type="catalytic activity">
    <reaction evidence="1">
        <text>GTP + H2O = GDP + phosphate + H(+)</text>
        <dbReference type="Rhea" id="RHEA:19669"/>
        <dbReference type="ChEBI" id="CHEBI:15377"/>
        <dbReference type="ChEBI" id="CHEBI:15378"/>
        <dbReference type="ChEBI" id="CHEBI:37565"/>
        <dbReference type="ChEBI" id="CHEBI:43474"/>
        <dbReference type="ChEBI" id="CHEBI:58189"/>
        <dbReference type="EC" id="3.6.5.4"/>
    </reaction>
</comment>
<comment type="subunit">
    <text evidence="1">Part of the signal recognition particle protein translocation system, which is composed of SRP and FtsY.</text>
</comment>
<comment type="subcellular location">
    <subcellularLocation>
        <location>Cell membrane</location>
        <topology>Peripheral membrane protein</topology>
        <orientation>Cytoplasmic side</orientation>
    </subcellularLocation>
    <subcellularLocation>
        <location evidence="1">Cytoplasm</location>
    </subcellularLocation>
</comment>
<comment type="similarity">
    <text evidence="1">Belongs to the GTP-binding SRP family. FtsY subfamily.</text>
</comment>
<accession>Q9RS67</accession>
<feature type="chain" id="PRO_0000416700" description="Signal recognition particle receptor FtsY">
    <location>
        <begin position="1"/>
        <end position="317"/>
    </location>
</feature>
<feature type="binding site" evidence="1">
    <location>
        <begin position="117"/>
        <end position="124"/>
    </location>
    <ligand>
        <name>GTP</name>
        <dbReference type="ChEBI" id="CHEBI:37565"/>
    </ligand>
</feature>
<feature type="binding site" evidence="1">
    <location>
        <begin position="199"/>
        <end position="203"/>
    </location>
    <ligand>
        <name>GTP</name>
        <dbReference type="ChEBI" id="CHEBI:37565"/>
    </ligand>
</feature>
<feature type="binding site" evidence="1">
    <location>
        <begin position="263"/>
        <end position="266"/>
    </location>
    <ligand>
        <name>GTP</name>
        <dbReference type="ChEBI" id="CHEBI:37565"/>
    </ligand>
</feature>
<reference key="1">
    <citation type="journal article" date="1999" name="Science">
        <title>Genome sequence of the radioresistant bacterium Deinococcus radiodurans R1.</title>
        <authorList>
            <person name="White O."/>
            <person name="Eisen J.A."/>
            <person name="Heidelberg J.F."/>
            <person name="Hickey E.K."/>
            <person name="Peterson J.D."/>
            <person name="Dodson R.J."/>
            <person name="Haft D.H."/>
            <person name="Gwinn M.L."/>
            <person name="Nelson W.C."/>
            <person name="Richardson D.L."/>
            <person name="Moffat K.S."/>
            <person name="Qin H."/>
            <person name="Jiang L."/>
            <person name="Pamphile W."/>
            <person name="Crosby M."/>
            <person name="Shen M."/>
            <person name="Vamathevan J.J."/>
            <person name="Lam P."/>
            <person name="McDonald L.A."/>
            <person name="Utterback T.R."/>
            <person name="Zalewski C."/>
            <person name="Makarova K.S."/>
            <person name="Aravind L."/>
            <person name="Daly M.J."/>
            <person name="Minton K.W."/>
            <person name="Fleischmann R.D."/>
            <person name="Ketchum K.A."/>
            <person name="Nelson K.E."/>
            <person name="Salzberg S.L."/>
            <person name="Smith H.O."/>
            <person name="Venter J.C."/>
            <person name="Fraser C.M."/>
        </authorList>
    </citation>
    <scope>NUCLEOTIDE SEQUENCE [LARGE SCALE GENOMIC DNA]</scope>
    <source>
        <strain>ATCC 13939 / DSM 20539 / JCM 16871 / CCUG 27074 / LMG 4051 / NBRC 15346 / NCIMB 9279 / VKM B-1422 / R1</strain>
    </source>
</reference>
<name>FTSY_DEIRA</name>
<gene>
    <name evidence="1" type="primary">ftsY</name>
    <name type="ordered locus">DR_2260</name>
</gene>
<evidence type="ECO:0000255" key="1">
    <source>
        <dbReference type="HAMAP-Rule" id="MF_00920"/>
    </source>
</evidence>
<protein>
    <recommendedName>
        <fullName evidence="1">Signal recognition particle receptor FtsY</fullName>
        <shortName evidence="1">SRP receptor</shortName>
        <ecNumber evidence="1">3.6.5.4</ecNumber>
    </recommendedName>
</protein>
<dbReference type="EC" id="3.6.5.4" evidence="1"/>
<dbReference type="EMBL" id="AE000513">
    <property type="protein sequence ID" value="AAF11805.1"/>
    <property type="molecule type" value="Genomic_DNA"/>
</dbReference>
<dbReference type="PIR" id="D75296">
    <property type="entry name" value="D75296"/>
</dbReference>
<dbReference type="RefSeq" id="NP_295981.1">
    <property type="nucleotide sequence ID" value="NC_001263.1"/>
</dbReference>
<dbReference type="RefSeq" id="WP_010888888.1">
    <property type="nucleotide sequence ID" value="NC_001263.1"/>
</dbReference>
<dbReference type="SMR" id="Q9RS67"/>
<dbReference type="FunCoup" id="Q9RS67">
    <property type="interactions" value="414"/>
</dbReference>
<dbReference type="STRING" id="243230.DR_2260"/>
<dbReference type="PaxDb" id="243230-DR_2260"/>
<dbReference type="EnsemblBacteria" id="AAF11805">
    <property type="protein sequence ID" value="AAF11805"/>
    <property type="gene ID" value="DR_2260"/>
</dbReference>
<dbReference type="GeneID" id="69518512"/>
<dbReference type="KEGG" id="dra:DR_2260"/>
<dbReference type="PATRIC" id="fig|243230.17.peg.2488"/>
<dbReference type="eggNOG" id="COG0552">
    <property type="taxonomic scope" value="Bacteria"/>
</dbReference>
<dbReference type="HOGENOM" id="CLU_009301_3_4_0"/>
<dbReference type="InParanoid" id="Q9RS67"/>
<dbReference type="OrthoDB" id="9804720at2"/>
<dbReference type="Proteomes" id="UP000002524">
    <property type="component" value="Chromosome 1"/>
</dbReference>
<dbReference type="GO" id="GO:0005737">
    <property type="term" value="C:cytoplasm"/>
    <property type="evidence" value="ECO:0007669"/>
    <property type="project" value="UniProtKB-SubCell"/>
</dbReference>
<dbReference type="GO" id="GO:0005886">
    <property type="term" value="C:plasma membrane"/>
    <property type="evidence" value="ECO:0000318"/>
    <property type="project" value="GO_Central"/>
</dbReference>
<dbReference type="GO" id="GO:0016887">
    <property type="term" value="F:ATP hydrolysis activity"/>
    <property type="evidence" value="ECO:0007669"/>
    <property type="project" value="InterPro"/>
</dbReference>
<dbReference type="GO" id="GO:0005525">
    <property type="term" value="F:GTP binding"/>
    <property type="evidence" value="ECO:0007669"/>
    <property type="project" value="UniProtKB-UniRule"/>
</dbReference>
<dbReference type="GO" id="GO:0003924">
    <property type="term" value="F:GTPase activity"/>
    <property type="evidence" value="ECO:0000318"/>
    <property type="project" value="GO_Central"/>
</dbReference>
<dbReference type="GO" id="GO:0005047">
    <property type="term" value="F:signal recognition particle binding"/>
    <property type="evidence" value="ECO:0000318"/>
    <property type="project" value="GO_Central"/>
</dbReference>
<dbReference type="GO" id="GO:0006605">
    <property type="term" value="P:protein targeting"/>
    <property type="evidence" value="ECO:0000318"/>
    <property type="project" value="GO_Central"/>
</dbReference>
<dbReference type="GO" id="GO:0006614">
    <property type="term" value="P:SRP-dependent cotranslational protein targeting to membrane"/>
    <property type="evidence" value="ECO:0007669"/>
    <property type="project" value="InterPro"/>
</dbReference>
<dbReference type="CDD" id="cd17874">
    <property type="entry name" value="FtsY"/>
    <property type="match status" value="1"/>
</dbReference>
<dbReference type="FunFam" id="3.40.50.300:FF:000053">
    <property type="entry name" value="Signal recognition particle receptor FtsY"/>
    <property type="match status" value="1"/>
</dbReference>
<dbReference type="Gene3D" id="3.40.50.300">
    <property type="entry name" value="P-loop containing nucleotide triphosphate hydrolases"/>
    <property type="match status" value="1"/>
</dbReference>
<dbReference type="Gene3D" id="1.20.120.140">
    <property type="entry name" value="Signal recognition particle SRP54, nucleotide-binding domain"/>
    <property type="match status" value="1"/>
</dbReference>
<dbReference type="HAMAP" id="MF_00920">
    <property type="entry name" value="FtsY"/>
    <property type="match status" value="1"/>
</dbReference>
<dbReference type="InterPro" id="IPR003593">
    <property type="entry name" value="AAA+_ATPase"/>
</dbReference>
<dbReference type="InterPro" id="IPR027417">
    <property type="entry name" value="P-loop_NTPase"/>
</dbReference>
<dbReference type="InterPro" id="IPR013822">
    <property type="entry name" value="Signal_recog_particl_SRP54_hlx"/>
</dbReference>
<dbReference type="InterPro" id="IPR004390">
    <property type="entry name" value="SR_rcpt_FtsY"/>
</dbReference>
<dbReference type="InterPro" id="IPR036225">
    <property type="entry name" value="SRP/SRP_N"/>
</dbReference>
<dbReference type="InterPro" id="IPR000897">
    <property type="entry name" value="SRP54_GTPase_dom"/>
</dbReference>
<dbReference type="InterPro" id="IPR042101">
    <property type="entry name" value="SRP54_N_sf"/>
</dbReference>
<dbReference type="NCBIfam" id="TIGR00064">
    <property type="entry name" value="ftsY"/>
    <property type="match status" value="1"/>
</dbReference>
<dbReference type="PANTHER" id="PTHR43134">
    <property type="entry name" value="SIGNAL RECOGNITION PARTICLE RECEPTOR SUBUNIT ALPHA"/>
    <property type="match status" value="1"/>
</dbReference>
<dbReference type="PANTHER" id="PTHR43134:SF1">
    <property type="entry name" value="SIGNAL RECOGNITION PARTICLE RECEPTOR SUBUNIT ALPHA"/>
    <property type="match status" value="1"/>
</dbReference>
<dbReference type="Pfam" id="PF00448">
    <property type="entry name" value="SRP54"/>
    <property type="match status" value="1"/>
</dbReference>
<dbReference type="Pfam" id="PF02881">
    <property type="entry name" value="SRP54_N"/>
    <property type="match status" value="1"/>
</dbReference>
<dbReference type="SMART" id="SM00382">
    <property type="entry name" value="AAA"/>
    <property type="match status" value="1"/>
</dbReference>
<dbReference type="SMART" id="SM00962">
    <property type="entry name" value="SRP54"/>
    <property type="match status" value="1"/>
</dbReference>
<dbReference type="SUPFAM" id="SSF47364">
    <property type="entry name" value="Domain of the SRP/SRP receptor G-proteins"/>
    <property type="match status" value="1"/>
</dbReference>
<dbReference type="SUPFAM" id="SSF52540">
    <property type="entry name" value="P-loop containing nucleoside triphosphate hydrolases"/>
    <property type="match status" value="1"/>
</dbReference>
<dbReference type="PROSITE" id="PS00300">
    <property type="entry name" value="SRP54"/>
    <property type="match status" value="1"/>
</dbReference>
<organism>
    <name type="scientific">Deinococcus radiodurans (strain ATCC 13939 / DSM 20539 / JCM 16871 / CCUG 27074 / LMG 4051 / NBRC 15346 / NCIMB 9279 / VKM B-1422 / R1)</name>
    <dbReference type="NCBI Taxonomy" id="243230"/>
    <lineage>
        <taxon>Bacteria</taxon>
        <taxon>Thermotogati</taxon>
        <taxon>Deinococcota</taxon>
        <taxon>Deinococci</taxon>
        <taxon>Deinococcales</taxon>
        <taxon>Deinococcaceae</taxon>
        <taxon>Deinococcus</taxon>
    </lineage>
</organism>